<feature type="chain" id="PRO_0000246877" description="7-cyano-7-deazaguanine synthase">
    <location>
        <begin position="1"/>
        <end position="220"/>
    </location>
</feature>
<feature type="binding site" evidence="1">
    <location>
        <begin position="11"/>
        <end position="21"/>
    </location>
    <ligand>
        <name>ATP</name>
        <dbReference type="ChEBI" id="CHEBI:30616"/>
    </ligand>
</feature>
<feature type="binding site" evidence="1">
    <location>
        <position position="186"/>
    </location>
    <ligand>
        <name>Zn(2+)</name>
        <dbReference type="ChEBI" id="CHEBI:29105"/>
    </ligand>
</feature>
<feature type="binding site" evidence="1">
    <location>
        <position position="194"/>
    </location>
    <ligand>
        <name>Zn(2+)</name>
        <dbReference type="ChEBI" id="CHEBI:29105"/>
    </ligand>
</feature>
<feature type="binding site" evidence="1">
    <location>
        <position position="197"/>
    </location>
    <ligand>
        <name>Zn(2+)</name>
        <dbReference type="ChEBI" id="CHEBI:29105"/>
    </ligand>
</feature>
<feature type="binding site" evidence="1">
    <location>
        <position position="200"/>
    </location>
    <ligand>
        <name>Zn(2+)</name>
        <dbReference type="ChEBI" id="CHEBI:29105"/>
    </ligand>
</feature>
<name>QUEC_PORGI</name>
<gene>
    <name evidence="1" type="primary">queC</name>
    <name type="ordered locus">PG_1310</name>
</gene>
<comment type="function">
    <text evidence="1">Catalyzes the ATP-dependent conversion of 7-carboxy-7-deazaguanine (CDG) to 7-cyano-7-deazaguanine (preQ(0)).</text>
</comment>
<comment type="catalytic activity">
    <reaction evidence="1">
        <text>7-carboxy-7-deazaguanine + NH4(+) + ATP = 7-cyano-7-deazaguanine + ADP + phosphate + H2O + H(+)</text>
        <dbReference type="Rhea" id="RHEA:27982"/>
        <dbReference type="ChEBI" id="CHEBI:15377"/>
        <dbReference type="ChEBI" id="CHEBI:15378"/>
        <dbReference type="ChEBI" id="CHEBI:28938"/>
        <dbReference type="ChEBI" id="CHEBI:30616"/>
        <dbReference type="ChEBI" id="CHEBI:43474"/>
        <dbReference type="ChEBI" id="CHEBI:45075"/>
        <dbReference type="ChEBI" id="CHEBI:61036"/>
        <dbReference type="ChEBI" id="CHEBI:456216"/>
        <dbReference type="EC" id="6.3.4.20"/>
    </reaction>
</comment>
<comment type="cofactor">
    <cofactor evidence="1">
        <name>Zn(2+)</name>
        <dbReference type="ChEBI" id="CHEBI:29105"/>
    </cofactor>
    <text evidence="1">Binds 1 zinc ion per subunit.</text>
</comment>
<comment type="pathway">
    <text evidence="1">Purine metabolism; 7-cyano-7-deazaguanine biosynthesis.</text>
</comment>
<comment type="similarity">
    <text evidence="1">Belongs to the QueC family.</text>
</comment>
<keyword id="KW-0067">ATP-binding</keyword>
<keyword id="KW-0436">Ligase</keyword>
<keyword id="KW-0479">Metal-binding</keyword>
<keyword id="KW-0547">Nucleotide-binding</keyword>
<keyword id="KW-0671">Queuosine biosynthesis</keyword>
<keyword id="KW-1185">Reference proteome</keyword>
<keyword id="KW-0862">Zinc</keyword>
<organism>
    <name type="scientific">Porphyromonas gingivalis (strain ATCC BAA-308 / W83)</name>
    <dbReference type="NCBI Taxonomy" id="242619"/>
    <lineage>
        <taxon>Bacteria</taxon>
        <taxon>Pseudomonadati</taxon>
        <taxon>Bacteroidota</taxon>
        <taxon>Bacteroidia</taxon>
        <taxon>Bacteroidales</taxon>
        <taxon>Porphyromonadaceae</taxon>
        <taxon>Porphyromonas</taxon>
    </lineage>
</organism>
<sequence>MQREKDSLIVVSGGMDSVTLMYEKRASIALALSFDYGSKHNARELSFARLHAERLGVEHLIIPLDFIGQYFQSDLLLSGGDIPEGRYDEENMKSTVVPFRNGIMLAVAAGLAESRGLRRIYIANHFGDHAIYPDCRASFIRPMTEAVRCGTTNGVLIEAPYTDITKTDIARIGASLGIDYAETWSCYKGGVFHCGVCGTCVERREALHDAGIPDATEYEG</sequence>
<accession>Q7MV08</accession>
<protein>
    <recommendedName>
        <fullName evidence="1">7-cyano-7-deazaguanine synthase</fullName>
        <ecNumber evidence="1">6.3.4.20</ecNumber>
    </recommendedName>
    <alternativeName>
        <fullName evidence="1">7-cyano-7-carbaguanine synthase</fullName>
    </alternativeName>
    <alternativeName>
        <fullName evidence="1">PreQ(0) synthase</fullName>
    </alternativeName>
    <alternativeName>
        <fullName evidence="1">Queuosine biosynthesis protein QueC</fullName>
    </alternativeName>
</protein>
<evidence type="ECO:0000255" key="1">
    <source>
        <dbReference type="HAMAP-Rule" id="MF_01633"/>
    </source>
</evidence>
<proteinExistence type="inferred from homology"/>
<dbReference type="EC" id="6.3.4.20" evidence="1"/>
<dbReference type="EMBL" id="AE015924">
    <property type="protein sequence ID" value="AAQ66382.1"/>
    <property type="molecule type" value="Genomic_DNA"/>
</dbReference>
<dbReference type="RefSeq" id="WP_010956277.1">
    <property type="nucleotide sequence ID" value="NC_002950.2"/>
</dbReference>
<dbReference type="SMR" id="Q7MV08"/>
<dbReference type="STRING" id="242619.PG_1310"/>
<dbReference type="EnsemblBacteria" id="AAQ66382">
    <property type="protein sequence ID" value="AAQ66382"/>
    <property type="gene ID" value="PG_1310"/>
</dbReference>
<dbReference type="KEGG" id="pgi:PG_1310"/>
<dbReference type="PATRIC" id="fig|242619.8.peg.1211"/>
<dbReference type="eggNOG" id="COG0603">
    <property type="taxonomic scope" value="Bacteria"/>
</dbReference>
<dbReference type="HOGENOM" id="CLU_081854_1_0_10"/>
<dbReference type="BioCyc" id="PGIN242619:G1G02-1214-MONOMER"/>
<dbReference type="UniPathway" id="UPA00391"/>
<dbReference type="Proteomes" id="UP000000588">
    <property type="component" value="Chromosome"/>
</dbReference>
<dbReference type="GO" id="GO:0005524">
    <property type="term" value="F:ATP binding"/>
    <property type="evidence" value="ECO:0007669"/>
    <property type="project" value="UniProtKB-UniRule"/>
</dbReference>
<dbReference type="GO" id="GO:0016879">
    <property type="term" value="F:ligase activity, forming carbon-nitrogen bonds"/>
    <property type="evidence" value="ECO:0007669"/>
    <property type="project" value="UniProtKB-UniRule"/>
</dbReference>
<dbReference type="GO" id="GO:0008270">
    <property type="term" value="F:zinc ion binding"/>
    <property type="evidence" value="ECO:0007669"/>
    <property type="project" value="UniProtKB-UniRule"/>
</dbReference>
<dbReference type="GO" id="GO:0008616">
    <property type="term" value="P:queuosine biosynthetic process"/>
    <property type="evidence" value="ECO:0007669"/>
    <property type="project" value="UniProtKB-UniRule"/>
</dbReference>
<dbReference type="CDD" id="cd01995">
    <property type="entry name" value="QueC-like"/>
    <property type="match status" value="1"/>
</dbReference>
<dbReference type="Gene3D" id="3.40.50.620">
    <property type="entry name" value="HUPs"/>
    <property type="match status" value="1"/>
</dbReference>
<dbReference type="HAMAP" id="MF_01633">
    <property type="entry name" value="QueC"/>
    <property type="match status" value="1"/>
</dbReference>
<dbReference type="InterPro" id="IPR018317">
    <property type="entry name" value="QueC"/>
</dbReference>
<dbReference type="InterPro" id="IPR014729">
    <property type="entry name" value="Rossmann-like_a/b/a_fold"/>
</dbReference>
<dbReference type="NCBIfam" id="TIGR00364">
    <property type="entry name" value="7-cyano-7-deazaguanine synthase QueC"/>
    <property type="match status" value="1"/>
</dbReference>
<dbReference type="PANTHER" id="PTHR42914">
    <property type="entry name" value="7-CYANO-7-DEAZAGUANINE SYNTHASE"/>
    <property type="match status" value="1"/>
</dbReference>
<dbReference type="PANTHER" id="PTHR42914:SF1">
    <property type="entry name" value="7-CYANO-7-DEAZAGUANINE SYNTHASE"/>
    <property type="match status" value="1"/>
</dbReference>
<dbReference type="Pfam" id="PF06508">
    <property type="entry name" value="QueC"/>
    <property type="match status" value="1"/>
</dbReference>
<dbReference type="PIRSF" id="PIRSF006293">
    <property type="entry name" value="ExsB"/>
    <property type="match status" value="1"/>
</dbReference>
<dbReference type="SUPFAM" id="SSF52402">
    <property type="entry name" value="Adenine nucleotide alpha hydrolases-like"/>
    <property type="match status" value="1"/>
</dbReference>
<reference key="1">
    <citation type="journal article" date="2003" name="J. Bacteriol.">
        <title>Complete genome sequence of the oral pathogenic bacterium Porphyromonas gingivalis strain W83.</title>
        <authorList>
            <person name="Nelson K.E."/>
            <person name="Fleischmann R.D."/>
            <person name="DeBoy R.T."/>
            <person name="Paulsen I.T."/>
            <person name="Fouts D.E."/>
            <person name="Eisen J.A."/>
            <person name="Daugherty S.C."/>
            <person name="Dodson R.J."/>
            <person name="Durkin A.S."/>
            <person name="Gwinn M.L."/>
            <person name="Haft D.H."/>
            <person name="Kolonay J.F."/>
            <person name="Nelson W.C."/>
            <person name="Mason T.M."/>
            <person name="Tallon L."/>
            <person name="Gray J."/>
            <person name="Granger D."/>
            <person name="Tettelin H."/>
            <person name="Dong H."/>
            <person name="Galvin J.L."/>
            <person name="Duncan M.J."/>
            <person name="Dewhirst F.E."/>
            <person name="Fraser C.M."/>
        </authorList>
    </citation>
    <scope>NUCLEOTIDE SEQUENCE [LARGE SCALE GENOMIC DNA]</scope>
    <source>
        <strain>ATCC BAA-308 / W83</strain>
    </source>
</reference>